<reference key="1">
    <citation type="journal article" date="2009" name="J. Bacteriol.">
        <title>Role of conjugative elements in the evolution of the multidrug-resistant pandemic clone Streptococcus pneumoniae Spain23F ST81.</title>
        <authorList>
            <person name="Croucher N.J."/>
            <person name="Walker D."/>
            <person name="Romero P."/>
            <person name="Lennard N."/>
            <person name="Paterson G.K."/>
            <person name="Bason N.C."/>
            <person name="Mitchell A.M."/>
            <person name="Quail M.A."/>
            <person name="Andrew P.W."/>
            <person name="Parkhill J."/>
            <person name="Bentley S.D."/>
            <person name="Mitchell T.J."/>
        </authorList>
    </citation>
    <scope>NUCLEOTIDE SEQUENCE [LARGE SCALE GENOMIC DNA]</scope>
    <source>
        <strain>ATCC 700669 / Spain 23F-1</strain>
    </source>
</reference>
<gene>
    <name evidence="1" type="primary">rpsC</name>
    <name type="ordered locus">SPN23F02050</name>
</gene>
<comment type="function">
    <text evidence="1">Binds the lower part of the 30S subunit head. Binds mRNA in the 70S ribosome, positioning it for translation.</text>
</comment>
<comment type="subunit">
    <text evidence="1">Part of the 30S ribosomal subunit. Forms a tight complex with proteins S10 and S14.</text>
</comment>
<comment type="similarity">
    <text evidence="1">Belongs to the universal ribosomal protein uS3 family.</text>
</comment>
<proteinExistence type="inferred from homology"/>
<keyword id="KW-0687">Ribonucleoprotein</keyword>
<keyword id="KW-0689">Ribosomal protein</keyword>
<keyword id="KW-0694">RNA-binding</keyword>
<keyword id="KW-0699">rRNA-binding</keyword>
<accession>B8ZKG3</accession>
<dbReference type="EMBL" id="FM211187">
    <property type="protein sequence ID" value="CAR68065.1"/>
    <property type="molecule type" value="Genomic_DNA"/>
</dbReference>
<dbReference type="RefSeq" id="WP_000529936.1">
    <property type="nucleotide sequence ID" value="NC_011900.1"/>
</dbReference>
<dbReference type="SMR" id="B8ZKG3"/>
<dbReference type="GeneID" id="49600535"/>
<dbReference type="KEGG" id="sne:SPN23F02050"/>
<dbReference type="HOGENOM" id="CLU_058591_0_2_9"/>
<dbReference type="GO" id="GO:0022627">
    <property type="term" value="C:cytosolic small ribosomal subunit"/>
    <property type="evidence" value="ECO:0007669"/>
    <property type="project" value="TreeGrafter"/>
</dbReference>
<dbReference type="GO" id="GO:0003729">
    <property type="term" value="F:mRNA binding"/>
    <property type="evidence" value="ECO:0007669"/>
    <property type="project" value="UniProtKB-UniRule"/>
</dbReference>
<dbReference type="GO" id="GO:0019843">
    <property type="term" value="F:rRNA binding"/>
    <property type="evidence" value="ECO:0007669"/>
    <property type="project" value="UniProtKB-UniRule"/>
</dbReference>
<dbReference type="GO" id="GO:0003735">
    <property type="term" value="F:structural constituent of ribosome"/>
    <property type="evidence" value="ECO:0007669"/>
    <property type="project" value="InterPro"/>
</dbReference>
<dbReference type="GO" id="GO:0006412">
    <property type="term" value="P:translation"/>
    <property type="evidence" value="ECO:0007669"/>
    <property type="project" value="UniProtKB-UniRule"/>
</dbReference>
<dbReference type="CDD" id="cd02412">
    <property type="entry name" value="KH-II_30S_S3"/>
    <property type="match status" value="1"/>
</dbReference>
<dbReference type="FunFam" id="3.30.1140.32:FF:000001">
    <property type="entry name" value="30S ribosomal protein S3"/>
    <property type="match status" value="1"/>
</dbReference>
<dbReference type="FunFam" id="3.30.300.20:FF:000001">
    <property type="entry name" value="30S ribosomal protein S3"/>
    <property type="match status" value="1"/>
</dbReference>
<dbReference type="Gene3D" id="3.30.300.20">
    <property type="match status" value="1"/>
</dbReference>
<dbReference type="Gene3D" id="3.30.1140.32">
    <property type="entry name" value="Ribosomal protein S3, C-terminal domain"/>
    <property type="match status" value="1"/>
</dbReference>
<dbReference type="HAMAP" id="MF_01309_B">
    <property type="entry name" value="Ribosomal_uS3_B"/>
    <property type="match status" value="1"/>
</dbReference>
<dbReference type="InterPro" id="IPR004087">
    <property type="entry name" value="KH_dom"/>
</dbReference>
<dbReference type="InterPro" id="IPR015946">
    <property type="entry name" value="KH_dom-like_a/b"/>
</dbReference>
<dbReference type="InterPro" id="IPR004044">
    <property type="entry name" value="KH_dom_type_2"/>
</dbReference>
<dbReference type="InterPro" id="IPR009019">
    <property type="entry name" value="KH_sf_prok-type"/>
</dbReference>
<dbReference type="InterPro" id="IPR036419">
    <property type="entry name" value="Ribosomal_S3_C_sf"/>
</dbReference>
<dbReference type="InterPro" id="IPR005704">
    <property type="entry name" value="Ribosomal_uS3_bac-typ"/>
</dbReference>
<dbReference type="InterPro" id="IPR001351">
    <property type="entry name" value="Ribosomal_uS3_C"/>
</dbReference>
<dbReference type="InterPro" id="IPR018280">
    <property type="entry name" value="Ribosomal_uS3_CS"/>
</dbReference>
<dbReference type="NCBIfam" id="TIGR01009">
    <property type="entry name" value="rpsC_bact"/>
    <property type="match status" value="1"/>
</dbReference>
<dbReference type="PANTHER" id="PTHR11760">
    <property type="entry name" value="30S/40S RIBOSOMAL PROTEIN S3"/>
    <property type="match status" value="1"/>
</dbReference>
<dbReference type="PANTHER" id="PTHR11760:SF19">
    <property type="entry name" value="SMALL RIBOSOMAL SUBUNIT PROTEIN US3C"/>
    <property type="match status" value="1"/>
</dbReference>
<dbReference type="Pfam" id="PF07650">
    <property type="entry name" value="KH_2"/>
    <property type="match status" value="1"/>
</dbReference>
<dbReference type="Pfam" id="PF00189">
    <property type="entry name" value="Ribosomal_S3_C"/>
    <property type="match status" value="1"/>
</dbReference>
<dbReference type="SMART" id="SM00322">
    <property type="entry name" value="KH"/>
    <property type="match status" value="1"/>
</dbReference>
<dbReference type="SUPFAM" id="SSF54814">
    <property type="entry name" value="Prokaryotic type KH domain (KH-domain type II)"/>
    <property type="match status" value="1"/>
</dbReference>
<dbReference type="SUPFAM" id="SSF54821">
    <property type="entry name" value="Ribosomal protein S3 C-terminal domain"/>
    <property type="match status" value="1"/>
</dbReference>
<dbReference type="PROSITE" id="PS50823">
    <property type="entry name" value="KH_TYPE_2"/>
    <property type="match status" value="1"/>
</dbReference>
<dbReference type="PROSITE" id="PS00548">
    <property type="entry name" value="RIBOSOMAL_S3"/>
    <property type="match status" value="1"/>
</dbReference>
<organism>
    <name type="scientific">Streptococcus pneumoniae (strain ATCC 700669 / Spain 23F-1)</name>
    <dbReference type="NCBI Taxonomy" id="561276"/>
    <lineage>
        <taxon>Bacteria</taxon>
        <taxon>Bacillati</taxon>
        <taxon>Bacillota</taxon>
        <taxon>Bacilli</taxon>
        <taxon>Lactobacillales</taxon>
        <taxon>Streptococcaceae</taxon>
        <taxon>Streptococcus</taxon>
    </lineage>
</organism>
<protein>
    <recommendedName>
        <fullName evidence="1">Small ribosomal subunit protein uS3</fullName>
    </recommendedName>
    <alternativeName>
        <fullName evidence="2">30S ribosomal protein S3</fullName>
    </alternativeName>
</protein>
<name>RS3_STRPJ</name>
<evidence type="ECO:0000255" key="1">
    <source>
        <dbReference type="HAMAP-Rule" id="MF_01309"/>
    </source>
</evidence>
<evidence type="ECO:0000305" key="2"/>
<sequence>MGQKVHPIGMRVGIIRDWDAKWYAEKEYADYLHEDLAIRKFVQKELADAAVSTIEIERAVNKVNVSLHTAKPGMVIGKGGANVDALRAKLNKLTGKQVHINIIEIKQPDLDAHLVGEGIARQLEQRVAFRRAQKQAIQRAMRAGAKGIKTQVSGRLNGADIARAEGYSEGTVPLHTLRADIDYAWEEADTTYGKLGVKVWIYRGEVLPARKNTKGGK</sequence>
<feature type="chain" id="PRO_1000165513" description="Small ribosomal subunit protein uS3">
    <location>
        <begin position="1"/>
        <end position="217"/>
    </location>
</feature>
<feature type="domain" description="KH type-2" evidence="1">
    <location>
        <begin position="38"/>
        <end position="106"/>
    </location>
</feature>